<reference key="1">
    <citation type="journal article" date="2004" name="Proc. Natl. Acad. Sci. U.S.A.">
        <title>Comparison of the genome of the oral pathogen Treponema denticola with other spirochete genomes.</title>
        <authorList>
            <person name="Seshadri R."/>
            <person name="Myers G.S.A."/>
            <person name="Tettelin H."/>
            <person name="Eisen J.A."/>
            <person name="Heidelberg J.F."/>
            <person name="Dodson R.J."/>
            <person name="Davidsen T.M."/>
            <person name="DeBoy R.T."/>
            <person name="Fouts D.E."/>
            <person name="Haft D.H."/>
            <person name="Selengut J."/>
            <person name="Ren Q."/>
            <person name="Brinkac L.M."/>
            <person name="Madupu R."/>
            <person name="Kolonay J.F."/>
            <person name="Durkin S.A."/>
            <person name="Daugherty S.C."/>
            <person name="Shetty J."/>
            <person name="Shvartsbeyn A."/>
            <person name="Gebregeorgis E."/>
            <person name="Geer K."/>
            <person name="Tsegaye G."/>
            <person name="Malek J.A."/>
            <person name="Ayodeji B."/>
            <person name="Shatsman S."/>
            <person name="McLeod M.P."/>
            <person name="Smajs D."/>
            <person name="Howell J.K."/>
            <person name="Pal S."/>
            <person name="Amin A."/>
            <person name="Vashisth P."/>
            <person name="McNeill T.Z."/>
            <person name="Xiang Q."/>
            <person name="Sodergren E."/>
            <person name="Baca E."/>
            <person name="Weinstock G.M."/>
            <person name="Norris S.J."/>
            <person name="Fraser C.M."/>
            <person name="Paulsen I.T."/>
        </authorList>
    </citation>
    <scope>NUCLEOTIDE SEQUENCE [LARGE SCALE GENOMIC DNA]</scope>
    <source>
        <strain>ATCC 35405 / DSM 14222 / CIP 103919 / JCM 8153 / KCTC 15104</strain>
    </source>
</reference>
<organism>
    <name type="scientific">Treponema denticola (strain ATCC 35405 / DSM 14222 / CIP 103919 / JCM 8153 / KCTC 15104)</name>
    <dbReference type="NCBI Taxonomy" id="243275"/>
    <lineage>
        <taxon>Bacteria</taxon>
        <taxon>Pseudomonadati</taxon>
        <taxon>Spirochaetota</taxon>
        <taxon>Spirochaetia</taxon>
        <taxon>Spirochaetales</taxon>
        <taxon>Treponemataceae</taxon>
        <taxon>Treponema</taxon>
    </lineage>
</organism>
<proteinExistence type="inferred from homology"/>
<gene>
    <name type="primary">alaS</name>
    <name type="ordered locus">TDE_1659</name>
</gene>
<comment type="function">
    <text evidence="1">Catalyzes the attachment of alanine to tRNA(Ala) in a two-step reaction: alanine is first activated by ATP to form Ala-AMP and then transferred to the acceptor end of tRNA(Ala). Also edits incorrectly charged Ser-tRNA(Ala) and Gly-tRNA(Ala) via its editing domain (By similarity).</text>
</comment>
<comment type="catalytic activity">
    <reaction>
        <text>tRNA(Ala) + L-alanine + ATP = L-alanyl-tRNA(Ala) + AMP + diphosphate</text>
        <dbReference type="Rhea" id="RHEA:12540"/>
        <dbReference type="Rhea" id="RHEA-COMP:9657"/>
        <dbReference type="Rhea" id="RHEA-COMP:9923"/>
        <dbReference type="ChEBI" id="CHEBI:30616"/>
        <dbReference type="ChEBI" id="CHEBI:33019"/>
        <dbReference type="ChEBI" id="CHEBI:57972"/>
        <dbReference type="ChEBI" id="CHEBI:78442"/>
        <dbReference type="ChEBI" id="CHEBI:78497"/>
        <dbReference type="ChEBI" id="CHEBI:456215"/>
        <dbReference type="EC" id="6.1.1.7"/>
    </reaction>
</comment>
<comment type="cofactor">
    <cofactor evidence="1">
        <name>Zn(2+)</name>
        <dbReference type="ChEBI" id="CHEBI:29105"/>
    </cofactor>
    <text evidence="1">Binds 1 zinc ion per subunit.</text>
</comment>
<comment type="subcellular location">
    <subcellularLocation>
        <location evidence="1">Cytoplasm</location>
    </subcellularLocation>
</comment>
<comment type="domain">
    <text evidence="1">Consists of two domains; the N-terminal catalytic domain (in this organism this is shorter than usual) and the editing domain; the C-terminal C-Ala domain found in most orthologs is missing. The editing domain removes incorrectly charged amino acids (By similarity).</text>
</comment>
<comment type="similarity">
    <text evidence="3">Belongs to the class-II aminoacyl-tRNA synthetase family.</text>
</comment>
<keyword id="KW-0030">Aminoacyl-tRNA synthetase</keyword>
<keyword id="KW-0067">ATP-binding</keyword>
<keyword id="KW-0963">Cytoplasm</keyword>
<keyword id="KW-0436">Ligase</keyword>
<keyword id="KW-0479">Metal-binding</keyword>
<keyword id="KW-0547">Nucleotide-binding</keyword>
<keyword id="KW-0648">Protein biosynthesis</keyword>
<keyword id="KW-1185">Reference proteome</keyword>
<keyword id="KW-0694">RNA-binding</keyword>
<keyword id="KW-0820">tRNA-binding</keyword>
<keyword id="KW-0862">Zinc</keyword>
<dbReference type="EC" id="6.1.1.7"/>
<dbReference type="EMBL" id="AE017226">
    <property type="protein sequence ID" value="AAS12175.1"/>
    <property type="molecule type" value="Genomic_DNA"/>
</dbReference>
<dbReference type="RefSeq" id="NP_972264.1">
    <property type="nucleotide sequence ID" value="NC_002967.9"/>
</dbReference>
<dbReference type="RefSeq" id="WP_002679355.1">
    <property type="nucleotide sequence ID" value="NC_002967.9"/>
</dbReference>
<dbReference type="SMR" id="P61708"/>
<dbReference type="STRING" id="243275.TDE_1659"/>
<dbReference type="PaxDb" id="243275-TDE_1659"/>
<dbReference type="GeneID" id="2739000"/>
<dbReference type="KEGG" id="tde:TDE_1659"/>
<dbReference type="PATRIC" id="fig|243275.7.peg.1586"/>
<dbReference type="eggNOG" id="COG0013">
    <property type="taxonomic scope" value="Bacteria"/>
</dbReference>
<dbReference type="HOGENOM" id="CLU_004485_0_2_12"/>
<dbReference type="OrthoDB" id="9803884at2"/>
<dbReference type="Proteomes" id="UP000008212">
    <property type="component" value="Chromosome"/>
</dbReference>
<dbReference type="GO" id="GO:0005829">
    <property type="term" value="C:cytosol"/>
    <property type="evidence" value="ECO:0007669"/>
    <property type="project" value="TreeGrafter"/>
</dbReference>
<dbReference type="GO" id="GO:0004813">
    <property type="term" value="F:alanine-tRNA ligase activity"/>
    <property type="evidence" value="ECO:0007669"/>
    <property type="project" value="UniProtKB-UniRule"/>
</dbReference>
<dbReference type="GO" id="GO:0002161">
    <property type="term" value="F:aminoacyl-tRNA deacylase activity"/>
    <property type="evidence" value="ECO:0007669"/>
    <property type="project" value="TreeGrafter"/>
</dbReference>
<dbReference type="GO" id="GO:0005524">
    <property type="term" value="F:ATP binding"/>
    <property type="evidence" value="ECO:0007669"/>
    <property type="project" value="UniProtKB-UniRule"/>
</dbReference>
<dbReference type="GO" id="GO:0000049">
    <property type="term" value="F:tRNA binding"/>
    <property type="evidence" value="ECO:0007669"/>
    <property type="project" value="UniProtKB-KW"/>
</dbReference>
<dbReference type="GO" id="GO:0008270">
    <property type="term" value="F:zinc ion binding"/>
    <property type="evidence" value="ECO:0007669"/>
    <property type="project" value="UniProtKB-UniRule"/>
</dbReference>
<dbReference type="GO" id="GO:0006419">
    <property type="term" value="P:alanyl-tRNA aminoacylation"/>
    <property type="evidence" value="ECO:0007669"/>
    <property type="project" value="UniProtKB-UniRule"/>
</dbReference>
<dbReference type="CDD" id="cd00673">
    <property type="entry name" value="AlaRS_core"/>
    <property type="match status" value="1"/>
</dbReference>
<dbReference type="FunFam" id="3.30.54.20:FF:000001">
    <property type="entry name" value="Alanine--tRNA ligase"/>
    <property type="match status" value="1"/>
</dbReference>
<dbReference type="FunFam" id="3.30.980.10:FF:000004">
    <property type="entry name" value="Alanine--tRNA ligase, cytoplasmic"/>
    <property type="match status" value="1"/>
</dbReference>
<dbReference type="Gene3D" id="3.30.54.20">
    <property type="match status" value="1"/>
</dbReference>
<dbReference type="Gene3D" id="3.30.930.10">
    <property type="entry name" value="Bira Bifunctional Protein, Domain 2"/>
    <property type="match status" value="1"/>
</dbReference>
<dbReference type="Gene3D" id="3.30.980.10">
    <property type="entry name" value="Threonyl-trna Synthetase, Chain A, domain 2"/>
    <property type="match status" value="1"/>
</dbReference>
<dbReference type="HAMAP" id="MF_00036_B">
    <property type="entry name" value="Ala_tRNA_synth_B"/>
    <property type="match status" value="1"/>
</dbReference>
<dbReference type="InterPro" id="IPR045864">
    <property type="entry name" value="aa-tRNA-synth_II/BPL/LPL"/>
</dbReference>
<dbReference type="InterPro" id="IPR002318">
    <property type="entry name" value="Ala-tRNA-lgiase_IIc"/>
</dbReference>
<dbReference type="InterPro" id="IPR018162">
    <property type="entry name" value="Ala-tRNA-ligase_IIc_anticod-bd"/>
</dbReference>
<dbReference type="InterPro" id="IPR018165">
    <property type="entry name" value="Ala-tRNA-synth_IIc_core"/>
</dbReference>
<dbReference type="InterPro" id="IPR018164">
    <property type="entry name" value="Ala-tRNA-synth_IIc_N"/>
</dbReference>
<dbReference type="InterPro" id="IPR050058">
    <property type="entry name" value="Ala-tRNA_ligase"/>
</dbReference>
<dbReference type="InterPro" id="IPR023033">
    <property type="entry name" value="Ala_tRNA_ligase_euk/bac"/>
</dbReference>
<dbReference type="InterPro" id="IPR018163">
    <property type="entry name" value="Thr/Ala-tRNA-synth_IIc_edit"/>
</dbReference>
<dbReference type="InterPro" id="IPR012947">
    <property type="entry name" value="tRNA_SAD"/>
</dbReference>
<dbReference type="NCBIfam" id="TIGR00344">
    <property type="entry name" value="alaS"/>
    <property type="match status" value="1"/>
</dbReference>
<dbReference type="NCBIfam" id="NF002436">
    <property type="entry name" value="PRK01584.1"/>
    <property type="match status" value="1"/>
</dbReference>
<dbReference type="PANTHER" id="PTHR11777:SF9">
    <property type="entry name" value="ALANINE--TRNA LIGASE, CYTOPLASMIC"/>
    <property type="match status" value="1"/>
</dbReference>
<dbReference type="PANTHER" id="PTHR11777">
    <property type="entry name" value="ALANYL-TRNA SYNTHETASE"/>
    <property type="match status" value="1"/>
</dbReference>
<dbReference type="Pfam" id="PF01411">
    <property type="entry name" value="tRNA-synt_2c"/>
    <property type="match status" value="1"/>
</dbReference>
<dbReference type="Pfam" id="PF07973">
    <property type="entry name" value="tRNA_SAD"/>
    <property type="match status" value="1"/>
</dbReference>
<dbReference type="PRINTS" id="PR00980">
    <property type="entry name" value="TRNASYNTHALA"/>
</dbReference>
<dbReference type="SMART" id="SM00863">
    <property type="entry name" value="tRNA_SAD"/>
    <property type="match status" value="1"/>
</dbReference>
<dbReference type="SUPFAM" id="SSF55681">
    <property type="entry name" value="Class II aaRS and biotin synthetases"/>
    <property type="match status" value="1"/>
</dbReference>
<dbReference type="SUPFAM" id="SSF101353">
    <property type="entry name" value="Putative anticodon-binding domain of alanyl-tRNA synthetase (AlaRS)"/>
    <property type="match status" value="1"/>
</dbReference>
<dbReference type="SUPFAM" id="SSF55186">
    <property type="entry name" value="ThrRS/AlaRS common domain"/>
    <property type="match status" value="1"/>
</dbReference>
<dbReference type="PROSITE" id="PS50860">
    <property type="entry name" value="AA_TRNA_LIGASE_II_ALA"/>
    <property type="match status" value="1"/>
</dbReference>
<protein>
    <recommendedName>
        <fullName>Alanine--tRNA ligase</fullName>
        <ecNumber>6.1.1.7</ecNumber>
    </recommendedName>
    <alternativeName>
        <fullName>Alanyl-tRNA synthetase</fullName>
        <shortName>AlaRS</shortName>
    </alternativeName>
</protein>
<sequence>MNKNITIDELRSKYIDFFKSKGHVEISGRSLIPENDPTVLFTTAGMHPLVPYLMGEPHPAGTRLTDVQKCVRTGDIDDVGDASHLTFFEMLGNWSLGDYFKKESIAYSFEFLTDEKYLGIPIDKLSFTVFEGNEDAPRDEESASIWESLGVSKDRIFFLPKEDNWWGPAGETGPCGPDTEIFIDTGKPACGSNCRPGCNCGKYVEIWNNVFMQYHKNMDGSYSPLKRKCVDTGMGVERTVAMLQGKPSVYNTEAFTSIIKSIEDISGVKYGDNEKTDTSIRIIADHVRTACFILGDPKTTLPSNIGAGYVLRRLIRRAVRHGKKLGIDGNFLSVPASAVIAQNAGFYTELKENETLILTELKAEEDKFLETLKKGEAEFEKMLPNLLKNPKKIIPGRMAFKLYDTYGFPIELTEELASESGLTVNREEFDEAFKKHQELSRAGSEQVFKGGLADHSEQTTAYHTATHLLHKALRMVLGDHVQQKGSNITAERLRFDFSHPEPMTEAEKKEVERLVNEAIKADLPVTMEVMPLEEAKKIGAMALFGEKYEDVVKVYKIGDFSTEVCGGPHVERTGSLGRFCIKKEQSSSSGVRRIRAVLEH</sequence>
<accession>P61708</accession>
<name>SYA_TREDE</name>
<evidence type="ECO:0000250" key="1"/>
<evidence type="ECO:0000255" key="2"/>
<evidence type="ECO:0000305" key="3"/>
<feature type="chain" id="PRO_0000075236" description="Alanine--tRNA ligase">
    <location>
        <begin position="1"/>
        <end position="600"/>
    </location>
</feature>
<feature type="binding site" evidence="2">
    <location>
        <position position="463"/>
    </location>
    <ligand>
        <name>Zn(2+)</name>
        <dbReference type="ChEBI" id="CHEBI:29105"/>
    </ligand>
</feature>
<feature type="binding site" evidence="2">
    <location>
        <position position="467"/>
    </location>
    <ligand>
        <name>Zn(2+)</name>
        <dbReference type="ChEBI" id="CHEBI:29105"/>
    </ligand>
</feature>
<feature type="binding site" evidence="2">
    <location>
        <position position="565"/>
    </location>
    <ligand>
        <name>Zn(2+)</name>
        <dbReference type="ChEBI" id="CHEBI:29105"/>
    </ligand>
</feature>
<feature type="binding site" evidence="2">
    <location>
        <position position="569"/>
    </location>
    <ligand>
        <name>Zn(2+)</name>
        <dbReference type="ChEBI" id="CHEBI:29105"/>
    </ligand>
</feature>